<protein>
    <recommendedName>
        <fullName evidence="1">ATP-dependent RNA helicase RhlB</fullName>
        <ecNumber evidence="1">3.6.4.13</ecNumber>
    </recommendedName>
</protein>
<proteinExistence type="inferred from homology"/>
<gene>
    <name evidence="1" type="primary">rhlB</name>
    <name type="ordered locus">SNSL254_A4195</name>
</gene>
<evidence type="ECO:0000255" key="1">
    <source>
        <dbReference type="HAMAP-Rule" id="MF_00661"/>
    </source>
</evidence>
<evidence type="ECO:0000256" key="2">
    <source>
        <dbReference type="SAM" id="MobiDB-lite"/>
    </source>
</evidence>
<organism>
    <name type="scientific">Salmonella newport (strain SL254)</name>
    <dbReference type="NCBI Taxonomy" id="423368"/>
    <lineage>
        <taxon>Bacteria</taxon>
        <taxon>Pseudomonadati</taxon>
        <taxon>Pseudomonadota</taxon>
        <taxon>Gammaproteobacteria</taxon>
        <taxon>Enterobacterales</taxon>
        <taxon>Enterobacteriaceae</taxon>
        <taxon>Salmonella</taxon>
    </lineage>
</organism>
<keyword id="KW-0067">ATP-binding</keyword>
<keyword id="KW-0963">Cytoplasm</keyword>
<keyword id="KW-0347">Helicase</keyword>
<keyword id="KW-0378">Hydrolase</keyword>
<keyword id="KW-0547">Nucleotide-binding</keyword>
<keyword id="KW-0694">RNA-binding</keyword>
<accession>B4SZ26</accession>
<feature type="chain" id="PRO_1000131305" description="ATP-dependent RNA helicase RhlB">
    <location>
        <begin position="1"/>
        <end position="421"/>
    </location>
</feature>
<feature type="domain" description="Helicase ATP-binding" evidence="1">
    <location>
        <begin position="40"/>
        <end position="219"/>
    </location>
</feature>
<feature type="domain" description="Helicase C-terminal" evidence="1">
    <location>
        <begin position="245"/>
        <end position="390"/>
    </location>
</feature>
<feature type="region of interest" description="Disordered" evidence="2">
    <location>
        <begin position="396"/>
        <end position="421"/>
    </location>
</feature>
<feature type="short sequence motif" description="Q motif">
    <location>
        <begin position="9"/>
        <end position="37"/>
    </location>
</feature>
<feature type="short sequence motif" description="DEAD box">
    <location>
        <begin position="165"/>
        <end position="168"/>
    </location>
</feature>
<feature type="compositionally biased region" description="Low complexity" evidence="2">
    <location>
        <begin position="402"/>
        <end position="414"/>
    </location>
</feature>
<feature type="binding site" evidence="1">
    <location>
        <begin position="53"/>
        <end position="60"/>
    </location>
    <ligand>
        <name>ATP</name>
        <dbReference type="ChEBI" id="CHEBI:30616"/>
    </ligand>
</feature>
<reference key="1">
    <citation type="journal article" date="2011" name="J. Bacteriol.">
        <title>Comparative genomics of 28 Salmonella enterica isolates: evidence for CRISPR-mediated adaptive sublineage evolution.</title>
        <authorList>
            <person name="Fricke W.F."/>
            <person name="Mammel M.K."/>
            <person name="McDermott P.F."/>
            <person name="Tartera C."/>
            <person name="White D.G."/>
            <person name="Leclerc J.E."/>
            <person name="Ravel J."/>
            <person name="Cebula T.A."/>
        </authorList>
    </citation>
    <scope>NUCLEOTIDE SEQUENCE [LARGE SCALE GENOMIC DNA]</scope>
    <source>
        <strain>SL254</strain>
    </source>
</reference>
<comment type="function">
    <text evidence="1">DEAD-box RNA helicase involved in RNA degradation. Has RNA-dependent ATPase activity and unwinds double-stranded RNA.</text>
</comment>
<comment type="catalytic activity">
    <reaction evidence="1">
        <text>ATP + H2O = ADP + phosphate + H(+)</text>
        <dbReference type="Rhea" id="RHEA:13065"/>
        <dbReference type="ChEBI" id="CHEBI:15377"/>
        <dbReference type="ChEBI" id="CHEBI:15378"/>
        <dbReference type="ChEBI" id="CHEBI:30616"/>
        <dbReference type="ChEBI" id="CHEBI:43474"/>
        <dbReference type="ChEBI" id="CHEBI:456216"/>
        <dbReference type="EC" id="3.6.4.13"/>
    </reaction>
</comment>
<comment type="subunit">
    <text evidence="1">Component of the RNA degradosome, which is a multiprotein complex involved in RNA processing and mRNA degradation.</text>
</comment>
<comment type="subcellular location">
    <subcellularLocation>
        <location evidence="1">Cytoplasm</location>
    </subcellularLocation>
</comment>
<comment type="similarity">
    <text evidence="1">Belongs to the DEAD box helicase family. RhlB subfamily.</text>
</comment>
<sequence>MSKTHLTEQKFSDFALHPQVVEALEKKGFYNCTPIQALALPLTLAGRDVAGQAQTGTGKTMAFLTSTFHYLLSHPAIDDRKVNQPRALIMAPTRELAVQIHADAEPLAQATGLKLGLAYGGDGYDKQLKVLESGVDILIGTTGRLIDYAKQNHINLGAIQVVVLDEADRMYDLGFIKDIRWLFRRMPPAAQRLNMLFSATLSYRVRELAFEQMNNAEYVEVEPEQKTGHRIKEELFYPSNEEKMRLLQTLIEEEWPDRAIIFANTKHRCEDIWGHLAADGHRVGLLTGDVAQKKRLRILDEFTRGDLDILVATDVAARGLHIPAVTHVFNYDLPDDCEDYVHRIGRTGRAGASGHSISLACEEYALNLPAIESYIGHSIPVSKYNPEALMNDLPKPLRLTRSRPGNGPRRAGAPRNRRRSG</sequence>
<name>RHLB_SALNS</name>
<dbReference type="EC" id="3.6.4.13" evidence="1"/>
<dbReference type="EMBL" id="CP001113">
    <property type="protein sequence ID" value="ACF64275.1"/>
    <property type="molecule type" value="Genomic_DNA"/>
</dbReference>
<dbReference type="RefSeq" id="WP_000047525.1">
    <property type="nucleotide sequence ID" value="NZ_CCMR01000001.1"/>
</dbReference>
<dbReference type="SMR" id="B4SZ26"/>
<dbReference type="KEGG" id="see:SNSL254_A4195"/>
<dbReference type="HOGENOM" id="CLU_003041_1_3_6"/>
<dbReference type="Proteomes" id="UP000008824">
    <property type="component" value="Chromosome"/>
</dbReference>
<dbReference type="GO" id="GO:0005829">
    <property type="term" value="C:cytosol"/>
    <property type="evidence" value="ECO:0007669"/>
    <property type="project" value="TreeGrafter"/>
</dbReference>
<dbReference type="GO" id="GO:0005524">
    <property type="term" value="F:ATP binding"/>
    <property type="evidence" value="ECO:0007669"/>
    <property type="project" value="UniProtKB-UniRule"/>
</dbReference>
<dbReference type="GO" id="GO:0016887">
    <property type="term" value="F:ATP hydrolysis activity"/>
    <property type="evidence" value="ECO:0007669"/>
    <property type="project" value="RHEA"/>
</dbReference>
<dbReference type="GO" id="GO:0003723">
    <property type="term" value="F:RNA binding"/>
    <property type="evidence" value="ECO:0007669"/>
    <property type="project" value="UniProtKB-UniRule"/>
</dbReference>
<dbReference type="GO" id="GO:0003724">
    <property type="term" value="F:RNA helicase activity"/>
    <property type="evidence" value="ECO:0007669"/>
    <property type="project" value="UniProtKB-UniRule"/>
</dbReference>
<dbReference type="GO" id="GO:0006401">
    <property type="term" value="P:RNA catabolic process"/>
    <property type="evidence" value="ECO:0007669"/>
    <property type="project" value="UniProtKB-UniRule"/>
</dbReference>
<dbReference type="CDD" id="cd00268">
    <property type="entry name" value="DEADc"/>
    <property type="match status" value="1"/>
</dbReference>
<dbReference type="CDD" id="cd18787">
    <property type="entry name" value="SF2_C_DEAD"/>
    <property type="match status" value="1"/>
</dbReference>
<dbReference type="FunFam" id="3.40.50.300:FF:000008">
    <property type="entry name" value="ATP-dependent RNA helicase RhlB"/>
    <property type="match status" value="1"/>
</dbReference>
<dbReference type="FunFam" id="3.40.50.300:FF:000312">
    <property type="entry name" value="ATP-dependent RNA helicase RhlB"/>
    <property type="match status" value="1"/>
</dbReference>
<dbReference type="Gene3D" id="3.40.50.300">
    <property type="entry name" value="P-loop containing nucleotide triphosphate hydrolases"/>
    <property type="match status" value="2"/>
</dbReference>
<dbReference type="HAMAP" id="MF_00661">
    <property type="entry name" value="DEAD_helicase_RhlB"/>
    <property type="match status" value="1"/>
</dbReference>
<dbReference type="InterPro" id="IPR011545">
    <property type="entry name" value="DEAD/DEAH_box_helicase_dom"/>
</dbReference>
<dbReference type="InterPro" id="IPR050079">
    <property type="entry name" value="DEAD_box_RNA_helicase"/>
</dbReference>
<dbReference type="InterPro" id="IPR014001">
    <property type="entry name" value="Helicase_ATP-bd"/>
</dbReference>
<dbReference type="InterPro" id="IPR001650">
    <property type="entry name" value="Helicase_C-like"/>
</dbReference>
<dbReference type="InterPro" id="IPR027417">
    <property type="entry name" value="P-loop_NTPase"/>
</dbReference>
<dbReference type="InterPro" id="IPR000629">
    <property type="entry name" value="RNA-helicase_DEAD-box_CS"/>
</dbReference>
<dbReference type="InterPro" id="IPR023554">
    <property type="entry name" value="RNA_helicase_ATP-dep_RhlB"/>
</dbReference>
<dbReference type="InterPro" id="IPR014014">
    <property type="entry name" value="RNA_helicase_DEAD_Q_motif"/>
</dbReference>
<dbReference type="NCBIfam" id="NF003419">
    <property type="entry name" value="PRK04837.1"/>
    <property type="match status" value="1"/>
</dbReference>
<dbReference type="PANTHER" id="PTHR47959:SF10">
    <property type="entry name" value="ATP-DEPENDENT RNA HELICASE RHLB"/>
    <property type="match status" value="1"/>
</dbReference>
<dbReference type="PANTHER" id="PTHR47959">
    <property type="entry name" value="ATP-DEPENDENT RNA HELICASE RHLE-RELATED"/>
    <property type="match status" value="1"/>
</dbReference>
<dbReference type="Pfam" id="PF00270">
    <property type="entry name" value="DEAD"/>
    <property type="match status" value="1"/>
</dbReference>
<dbReference type="Pfam" id="PF00271">
    <property type="entry name" value="Helicase_C"/>
    <property type="match status" value="1"/>
</dbReference>
<dbReference type="SMART" id="SM00487">
    <property type="entry name" value="DEXDc"/>
    <property type="match status" value="1"/>
</dbReference>
<dbReference type="SMART" id="SM00490">
    <property type="entry name" value="HELICc"/>
    <property type="match status" value="1"/>
</dbReference>
<dbReference type="SUPFAM" id="SSF52540">
    <property type="entry name" value="P-loop containing nucleoside triphosphate hydrolases"/>
    <property type="match status" value="1"/>
</dbReference>
<dbReference type="PROSITE" id="PS00039">
    <property type="entry name" value="DEAD_ATP_HELICASE"/>
    <property type="match status" value="1"/>
</dbReference>
<dbReference type="PROSITE" id="PS51192">
    <property type="entry name" value="HELICASE_ATP_BIND_1"/>
    <property type="match status" value="1"/>
</dbReference>
<dbReference type="PROSITE" id="PS51194">
    <property type="entry name" value="HELICASE_CTER"/>
    <property type="match status" value="1"/>
</dbReference>
<dbReference type="PROSITE" id="PS51195">
    <property type="entry name" value="Q_MOTIF"/>
    <property type="match status" value="1"/>
</dbReference>